<protein>
    <recommendedName>
        <fullName>Toxin OAIP 5</fullName>
    </recommendedName>
</protein>
<feature type="signal peptide" evidence="2">
    <location>
        <begin position="1"/>
        <end position="19"/>
    </location>
</feature>
<feature type="propeptide" id="PRO_0000424400">
    <location>
        <begin position="20"/>
        <end position="40"/>
    </location>
</feature>
<feature type="chain" id="PRO_0000424401" description="Toxin OAIP 5">
    <location>
        <begin position="41"/>
        <end position="78"/>
    </location>
</feature>
<feature type="disulfide bond" evidence="1">
    <location>
        <begin position="43"/>
        <end position="56"/>
    </location>
</feature>
<feature type="disulfide bond" evidence="1">
    <location>
        <begin position="47"/>
        <end position="70"/>
    </location>
</feature>
<feature type="disulfide bond" evidence="1">
    <location>
        <begin position="64"/>
        <end position="75"/>
    </location>
</feature>
<evidence type="ECO:0000250" key="1"/>
<evidence type="ECO:0000255" key="2"/>
<evidence type="ECO:0000269" key="3">
    <source>
    </source>
</evidence>
<evidence type="ECO:0000305" key="4"/>
<keyword id="KW-0903">Direct protein sequencing</keyword>
<keyword id="KW-1015">Disulfide bond</keyword>
<keyword id="KW-0872">Ion channel impairing toxin</keyword>
<keyword id="KW-0964">Secreted</keyword>
<keyword id="KW-0732">Signal</keyword>
<keyword id="KW-0800">Toxin</keyword>
<reference key="1">
    <citation type="journal article" date="2013" name="PLoS ONE">
        <title>SVM-based prediction of propeptide cleavage sites in spider toxins identifies toxin innovation in an australian tarantula.</title>
        <authorList>
            <person name="Wong E.S."/>
            <person name="Hardy M.C."/>
            <person name="Wood D."/>
            <person name="Bailey T."/>
            <person name="King G.F."/>
        </authorList>
    </citation>
    <scope>NUCLEOTIDE SEQUENCE [MRNA]</scope>
    <scope>PARTIAL PROTEIN SEQUENCE</scope>
    <scope>FUNCTION</scope>
    <source>
        <tissue>Venom</tissue>
        <tissue>Venom gland</tissue>
    </source>
</reference>
<accession>P0DM69</accession>
<organism>
    <name type="scientific">Selenotypus plumipes</name>
    <name type="common">Australian featherleg tarantula</name>
    <dbReference type="NCBI Taxonomy" id="1395661"/>
    <lineage>
        <taxon>Eukaryota</taxon>
        <taxon>Metazoa</taxon>
        <taxon>Ecdysozoa</taxon>
        <taxon>Arthropoda</taxon>
        <taxon>Chelicerata</taxon>
        <taxon>Arachnida</taxon>
        <taxon>Araneae</taxon>
        <taxon>Mygalomorphae</taxon>
        <taxon>Theraphosidae</taxon>
        <taxon>Selenotypus</taxon>
    </lineage>
</organism>
<name>TX5_SELPU</name>
<sequence length="78" mass="8723">MLIVILTCALLVIYHAAAAEELEAKDVIESKALATLDEERFECVLKCDIQYNGKNCKGKGENKCSGGWRCRFKLCLKI</sequence>
<dbReference type="SMR" id="P0DM69"/>
<dbReference type="GO" id="GO:0005576">
    <property type="term" value="C:extracellular region"/>
    <property type="evidence" value="ECO:0007669"/>
    <property type="project" value="UniProtKB-SubCell"/>
</dbReference>
<dbReference type="GO" id="GO:0099106">
    <property type="term" value="F:ion channel regulator activity"/>
    <property type="evidence" value="ECO:0007669"/>
    <property type="project" value="UniProtKB-KW"/>
</dbReference>
<dbReference type="GO" id="GO:0090729">
    <property type="term" value="F:toxin activity"/>
    <property type="evidence" value="ECO:0007669"/>
    <property type="project" value="UniProtKB-KW"/>
</dbReference>
<dbReference type="InterPro" id="IPR012625">
    <property type="entry name" value="Hwtx-2-like"/>
</dbReference>
<dbReference type="Pfam" id="PF08089">
    <property type="entry name" value="Toxin_20"/>
    <property type="match status" value="1"/>
</dbReference>
<dbReference type="SUPFAM" id="SSF57059">
    <property type="entry name" value="omega toxin-like"/>
    <property type="match status" value="1"/>
</dbReference>
<comment type="function">
    <text evidence="3">Probable ion channel inhibitor. Shows insecticidal activity when injected into mealworms.</text>
</comment>
<comment type="subcellular location">
    <subcellularLocation>
        <location>Secreted</location>
    </subcellularLocation>
</comment>
<comment type="tissue specificity">
    <text>Expressed by the venom gland.</text>
</comment>
<comment type="similarity">
    <text evidence="4">Belongs to the neurotoxin 12 (Hwtx-2) family. 05 (OAIP-5) subfamily.</text>
</comment>
<proteinExistence type="evidence at protein level"/>